<comment type="function">
    <text evidence="1">Allows the formation of correctly charged Asn-tRNA(Asn) or Gln-tRNA(Gln) through the transamidation of misacylated Asp-tRNA(Asn) or Glu-tRNA(Gln) in organisms which lack either or both of asparaginyl-tRNA or glutaminyl-tRNA synthetases. The reaction takes place in the presence of glutamine and ATP through an activated phospho-Asp-tRNA(Asn) or phospho-Glu-tRNA(Gln).</text>
</comment>
<comment type="catalytic activity">
    <reaction evidence="1">
        <text>L-glutamyl-tRNA(Gln) + L-glutamine + ATP + H2O = L-glutaminyl-tRNA(Gln) + L-glutamate + ADP + phosphate + H(+)</text>
        <dbReference type="Rhea" id="RHEA:17521"/>
        <dbReference type="Rhea" id="RHEA-COMP:9681"/>
        <dbReference type="Rhea" id="RHEA-COMP:9684"/>
        <dbReference type="ChEBI" id="CHEBI:15377"/>
        <dbReference type="ChEBI" id="CHEBI:15378"/>
        <dbReference type="ChEBI" id="CHEBI:29985"/>
        <dbReference type="ChEBI" id="CHEBI:30616"/>
        <dbReference type="ChEBI" id="CHEBI:43474"/>
        <dbReference type="ChEBI" id="CHEBI:58359"/>
        <dbReference type="ChEBI" id="CHEBI:78520"/>
        <dbReference type="ChEBI" id="CHEBI:78521"/>
        <dbReference type="ChEBI" id="CHEBI:456216"/>
    </reaction>
</comment>
<comment type="catalytic activity">
    <reaction evidence="1">
        <text>L-aspartyl-tRNA(Asn) + L-glutamine + ATP + H2O = L-asparaginyl-tRNA(Asn) + L-glutamate + ADP + phosphate + 2 H(+)</text>
        <dbReference type="Rhea" id="RHEA:14513"/>
        <dbReference type="Rhea" id="RHEA-COMP:9674"/>
        <dbReference type="Rhea" id="RHEA-COMP:9677"/>
        <dbReference type="ChEBI" id="CHEBI:15377"/>
        <dbReference type="ChEBI" id="CHEBI:15378"/>
        <dbReference type="ChEBI" id="CHEBI:29985"/>
        <dbReference type="ChEBI" id="CHEBI:30616"/>
        <dbReference type="ChEBI" id="CHEBI:43474"/>
        <dbReference type="ChEBI" id="CHEBI:58359"/>
        <dbReference type="ChEBI" id="CHEBI:78515"/>
        <dbReference type="ChEBI" id="CHEBI:78516"/>
        <dbReference type="ChEBI" id="CHEBI:456216"/>
    </reaction>
</comment>
<comment type="subunit">
    <text evidence="1">Heterotrimer of A, B and C subunits.</text>
</comment>
<comment type="similarity">
    <text evidence="1">Belongs to the GatB/GatE family. GatB subfamily.</text>
</comment>
<keyword id="KW-0067">ATP-binding</keyword>
<keyword id="KW-0436">Ligase</keyword>
<keyword id="KW-0547">Nucleotide-binding</keyword>
<keyword id="KW-0648">Protein biosynthesis</keyword>
<dbReference type="EC" id="6.3.5.-" evidence="1"/>
<dbReference type="EMBL" id="BX897700">
    <property type="protein sequence ID" value="CAF26214.1"/>
    <property type="molecule type" value="Genomic_DNA"/>
</dbReference>
<dbReference type="RefSeq" id="WP_011179468.1">
    <property type="nucleotide sequence ID" value="NC_005955.1"/>
</dbReference>
<dbReference type="SMR" id="Q6FZK7"/>
<dbReference type="KEGG" id="bqu:BQ07280"/>
<dbReference type="eggNOG" id="COG0064">
    <property type="taxonomic scope" value="Bacteria"/>
</dbReference>
<dbReference type="HOGENOM" id="CLU_019240_0_0_5"/>
<dbReference type="OrthoDB" id="9804078at2"/>
<dbReference type="Proteomes" id="UP000000597">
    <property type="component" value="Chromosome"/>
</dbReference>
<dbReference type="GO" id="GO:0050566">
    <property type="term" value="F:asparaginyl-tRNA synthase (glutamine-hydrolyzing) activity"/>
    <property type="evidence" value="ECO:0007669"/>
    <property type="project" value="RHEA"/>
</dbReference>
<dbReference type="GO" id="GO:0005524">
    <property type="term" value="F:ATP binding"/>
    <property type="evidence" value="ECO:0007669"/>
    <property type="project" value="UniProtKB-KW"/>
</dbReference>
<dbReference type="GO" id="GO:0050567">
    <property type="term" value="F:glutaminyl-tRNA synthase (glutamine-hydrolyzing) activity"/>
    <property type="evidence" value="ECO:0007669"/>
    <property type="project" value="UniProtKB-UniRule"/>
</dbReference>
<dbReference type="GO" id="GO:0070681">
    <property type="term" value="P:glutaminyl-tRNAGln biosynthesis via transamidation"/>
    <property type="evidence" value="ECO:0007669"/>
    <property type="project" value="TreeGrafter"/>
</dbReference>
<dbReference type="GO" id="GO:0006412">
    <property type="term" value="P:translation"/>
    <property type="evidence" value="ECO:0007669"/>
    <property type="project" value="UniProtKB-UniRule"/>
</dbReference>
<dbReference type="FunFam" id="1.10.10.410:FF:000001">
    <property type="entry name" value="Aspartyl/glutamyl-tRNA(Asn/Gln) amidotransferase subunit B"/>
    <property type="match status" value="1"/>
</dbReference>
<dbReference type="Gene3D" id="1.10.10.410">
    <property type="match status" value="1"/>
</dbReference>
<dbReference type="Gene3D" id="1.10.150.380">
    <property type="entry name" value="GatB domain, N-terminal subdomain"/>
    <property type="match status" value="1"/>
</dbReference>
<dbReference type="HAMAP" id="MF_00121">
    <property type="entry name" value="GatB"/>
    <property type="match status" value="1"/>
</dbReference>
<dbReference type="InterPro" id="IPR017959">
    <property type="entry name" value="Asn/Gln-tRNA_amidoTrfase_suB/E"/>
</dbReference>
<dbReference type="InterPro" id="IPR006075">
    <property type="entry name" value="Asn/Gln-tRNA_Trfase_suB/E_cat"/>
</dbReference>
<dbReference type="InterPro" id="IPR018027">
    <property type="entry name" value="Asn/Gln_amidotransferase"/>
</dbReference>
<dbReference type="InterPro" id="IPR003789">
    <property type="entry name" value="Asn/Gln_tRNA_amidoTrase-B-like"/>
</dbReference>
<dbReference type="InterPro" id="IPR004413">
    <property type="entry name" value="GatB"/>
</dbReference>
<dbReference type="InterPro" id="IPR042114">
    <property type="entry name" value="GatB_C_1"/>
</dbReference>
<dbReference type="InterPro" id="IPR023168">
    <property type="entry name" value="GatB_Yqey_C_2"/>
</dbReference>
<dbReference type="InterPro" id="IPR017958">
    <property type="entry name" value="Gln-tRNA_amidoTrfase_suB_CS"/>
</dbReference>
<dbReference type="InterPro" id="IPR014746">
    <property type="entry name" value="Gln_synth/guanido_kin_cat_dom"/>
</dbReference>
<dbReference type="NCBIfam" id="TIGR00133">
    <property type="entry name" value="gatB"/>
    <property type="match status" value="1"/>
</dbReference>
<dbReference type="NCBIfam" id="NF004012">
    <property type="entry name" value="PRK05477.1-2"/>
    <property type="match status" value="1"/>
</dbReference>
<dbReference type="NCBIfam" id="NF004014">
    <property type="entry name" value="PRK05477.1-4"/>
    <property type="match status" value="1"/>
</dbReference>
<dbReference type="NCBIfam" id="NF004015">
    <property type="entry name" value="PRK05477.1-5"/>
    <property type="match status" value="1"/>
</dbReference>
<dbReference type="PANTHER" id="PTHR11659">
    <property type="entry name" value="GLUTAMYL-TRNA GLN AMIDOTRANSFERASE SUBUNIT B MITOCHONDRIAL AND PROKARYOTIC PET112-RELATED"/>
    <property type="match status" value="1"/>
</dbReference>
<dbReference type="PANTHER" id="PTHR11659:SF0">
    <property type="entry name" value="GLUTAMYL-TRNA(GLN) AMIDOTRANSFERASE SUBUNIT B, MITOCHONDRIAL"/>
    <property type="match status" value="1"/>
</dbReference>
<dbReference type="Pfam" id="PF02934">
    <property type="entry name" value="GatB_N"/>
    <property type="match status" value="1"/>
</dbReference>
<dbReference type="Pfam" id="PF02637">
    <property type="entry name" value="GatB_Yqey"/>
    <property type="match status" value="1"/>
</dbReference>
<dbReference type="SMART" id="SM00845">
    <property type="entry name" value="GatB_Yqey"/>
    <property type="match status" value="1"/>
</dbReference>
<dbReference type="SUPFAM" id="SSF89095">
    <property type="entry name" value="GatB/YqeY motif"/>
    <property type="match status" value="1"/>
</dbReference>
<dbReference type="SUPFAM" id="SSF55931">
    <property type="entry name" value="Glutamine synthetase/guanido kinase"/>
    <property type="match status" value="1"/>
</dbReference>
<dbReference type="PROSITE" id="PS01234">
    <property type="entry name" value="GATB"/>
    <property type="match status" value="1"/>
</dbReference>
<reference key="1">
    <citation type="journal article" date="2004" name="Proc. Natl. Acad. Sci. U.S.A.">
        <title>The louse-borne human pathogen Bartonella quintana is a genomic derivative of the zoonotic agent Bartonella henselae.</title>
        <authorList>
            <person name="Alsmark U.C.M."/>
            <person name="Frank A.C."/>
            <person name="Karlberg E.O."/>
            <person name="Legault B.-A."/>
            <person name="Ardell D.H."/>
            <person name="Canbaeck B."/>
            <person name="Eriksson A.-S."/>
            <person name="Naeslund A.K."/>
            <person name="Handley S.A."/>
            <person name="Huvet M."/>
            <person name="La Scola B."/>
            <person name="Holmberg M."/>
            <person name="Andersson S.G.E."/>
        </authorList>
    </citation>
    <scope>NUCLEOTIDE SEQUENCE [LARGE SCALE GENOMIC DNA]</scope>
    <source>
        <strain>Toulouse</strain>
    </source>
</reference>
<sequence length="499" mass="55260">MGIIDTRIPDSKRFISGVTGDWEVIIGMEVHAQIISNSKLFSGASTKFGAEPNNHVSLIDAAMPGMLPVINQECVRQAVRTGLGLKAHINLKSVFDRKNYFYPDLPQGYQISQFRYPVVGEGKITISIGPDPNGQFEDIEIGIERLHLEQDAGKSIHDQHPTMSFVDLNRSGVALMEIVSKPDMRSSDEAKAYMTKLRTIVRYLGTCDGNMDEGSMRADVNVSVRRPGENFGTRCEIKNVNSIRFIGQAIEYEARRQIAILEDGGVIDQETRLFDAAKGETRSMRSKEEAHDYRYFPDPDLLPLEFDQAFVDALAVELPELPDDIKARFINKMGLTPYDASILVAERAIADYFEEVACGRDGKMAANWVINDLLGALNKDNCAIEETPVAPSQLGAIIDLIKEGTISGKIAKDLFEIIWNEGGDPRQVVEERNMKQVTDIKAIERAVDEIVSNNSDKVAQAKQKPTLIGWFVGQVMKATGGKANPQTVNELVKVKLGID</sequence>
<name>GATB_BARQU</name>
<feature type="chain" id="PRO_0000241197" description="Aspartyl/glutamyl-tRNA(Asn/Gln) amidotransferase subunit B">
    <location>
        <begin position="1"/>
        <end position="499"/>
    </location>
</feature>
<accession>Q6FZK7</accession>
<organism>
    <name type="scientific">Bartonella quintana (strain Toulouse)</name>
    <name type="common">Rochalimaea quintana</name>
    <dbReference type="NCBI Taxonomy" id="283165"/>
    <lineage>
        <taxon>Bacteria</taxon>
        <taxon>Pseudomonadati</taxon>
        <taxon>Pseudomonadota</taxon>
        <taxon>Alphaproteobacteria</taxon>
        <taxon>Hyphomicrobiales</taxon>
        <taxon>Bartonellaceae</taxon>
        <taxon>Bartonella</taxon>
    </lineage>
</organism>
<gene>
    <name evidence="1" type="primary">gatB</name>
    <name type="ordered locus">BQ07280</name>
</gene>
<evidence type="ECO:0000255" key="1">
    <source>
        <dbReference type="HAMAP-Rule" id="MF_00121"/>
    </source>
</evidence>
<proteinExistence type="inferred from homology"/>
<protein>
    <recommendedName>
        <fullName evidence="1">Aspartyl/glutamyl-tRNA(Asn/Gln) amidotransferase subunit B</fullName>
        <shortName evidence="1">Asp/Glu-ADT subunit B</shortName>
        <ecNumber evidence="1">6.3.5.-</ecNumber>
    </recommendedName>
</protein>